<keyword id="KW-0025">Alternative splicing</keyword>
<keyword id="KW-0072">Autophagy</keyword>
<keyword id="KW-0256">Endoplasmic reticulum</keyword>
<keyword id="KW-0472">Membrane</keyword>
<keyword id="KW-0597">Phosphoprotein</keyword>
<keyword id="KW-1185">Reference proteome</keyword>
<keyword id="KW-0812">Transmembrane</keyword>
<keyword id="KW-1133">Transmembrane helix</keyword>
<dbReference type="EMBL" id="AK004960">
    <property type="protein sequence ID" value="BAB23700.1"/>
    <property type="molecule type" value="mRNA"/>
</dbReference>
<dbReference type="EMBL" id="AK004979">
    <property type="protein sequence ID" value="BAB23715.1"/>
    <property type="molecule type" value="mRNA"/>
</dbReference>
<dbReference type="EMBL" id="AK051025">
    <property type="protein sequence ID" value="BAC34501.1"/>
    <property type="molecule type" value="mRNA"/>
</dbReference>
<dbReference type="EMBL" id="AK151685">
    <property type="protein sequence ID" value="BAE30609.1"/>
    <property type="molecule type" value="mRNA"/>
</dbReference>
<dbReference type="EMBL" id="AK160000">
    <property type="protein sequence ID" value="BAE35548.1"/>
    <property type="molecule type" value="mRNA"/>
</dbReference>
<dbReference type="EMBL" id="AK163482">
    <property type="protein sequence ID" value="BAE37364.1"/>
    <property type="molecule type" value="mRNA"/>
</dbReference>
<dbReference type="EMBL" id="BX255926">
    <property type="status" value="NOT_ANNOTATED_CDS"/>
    <property type="molecule type" value="Genomic_DNA"/>
</dbReference>
<dbReference type="EMBL" id="BC006712">
    <property type="protein sequence ID" value="AAH06712.1"/>
    <property type="molecule type" value="mRNA"/>
</dbReference>
<dbReference type="EMBL" id="BC016089">
    <property type="protein sequence ID" value="AAH16089.1"/>
    <property type="molecule type" value="mRNA"/>
</dbReference>
<dbReference type="CCDS" id="CCDS25449.1">
    <molecule id="Q9CQV4-1"/>
</dbReference>
<dbReference type="CCDS" id="CCDS25450.1">
    <molecule id="Q9CQV4-2"/>
</dbReference>
<dbReference type="RefSeq" id="NP_080777.1">
    <molecule id="Q9CQV4-1"/>
    <property type="nucleotide sequence ID" value="NM_026501.3"/>
</dbReference>
<dbReference type="RefSeq" id="NP_083209.1">
    <molecule id="Q9CQV4-2"/>
    <property type="nucleotide sequence ID" value="NM_028933.4"/>
</dbReference>
<dbReference type="BioGRID" id="212590">
    <property type="interactions" value="1"/>
</dbReference>
<dbReference type="FunCoup" id="Q9CQV4">
    <property type="interactions" value="1911"/>
</dbReference>
<dbReference type="STRING" id="10090.ENSMUSP00000017946"/>
<dbReference type="GlyGen" id="Q9CQV4">
    <property type="glycosylation" value="1 site, 1 N-linked glycan (1 site)"/>
</dbReference>
<dbReference type="iPTMnet" id="Q9CQV4"/>
<dbReference type="PhosphoSitePlus" id="Q9CQV4"/>
<dbReference type="SwissPalm" id="Q9CQV4"/>
<dbReference type="jPOST" id="Q9CQV4"/>
<dbReference type="PaxDb" id="10090-ENSMUSP00000017946"/>
<dbReference type="PeptideAtlas" id="Q9CQV4"/>
<dbReference type="ProteomicsDB" id="253115">
    <molecule id="Q9CQV4-1"/>
</dbReference>
<dbReference type="ProteomicsDB" id="253116">
    <molecule id="Q9CQV4-2"/>
</dbReference>
<dbReference type="Pumba" id="Q9CQV4"/>
<dbReference type="Antibodypedia" id="3087">
    <property type="antibodies" value="70 antibodies from 16 providers"/>
</dbReference>
<dbReference type="Ensembl" id="ENSMUST00000017946.6">
    <molecule id="Q9CQV4-1"/>
    <property type="protein sequence ID" value="ENSMUSP00000017946.6"/>
    <property type="gene ID" value="ENSMUSG00000017802.15"/>
</dbReference>
<dbReference type="Ensembl" id="ENSMUST00000107295.10">
    <molecule id="Q9CQV4-2"/>
    <property type="protein sequence ID" value="ENSMUSP00000102916.4"/>
    <property type="gene ID" value="ENSMUSG00000017802.15"/>
</dbReference>
<dbReference type="GeneID" id="67998"/>
<dbReference type="KEGG" id="mmu:67998"/>
<dbReference type="UCSC" id="uc007lni.1">
    <molecule id="Q9CQV4-1"/>
    <property type="organism name" value="mouse"/>
</dbReference>
<dbReference type="AGR" id="MGI:1915248"/>
<dbReference type="CTD" id="162427"/>
<dbReference type="MGI" id="MGI:1915248">
    <property type="gene designation" value="Retreg3"/>
</dbReference>
<dbReference type="VEuPathDB" id="HostDB:ENSMUSG00000017802"/>
<dbReference type="eggNOG" id="ENOG502QPTN">
    <property type="taxonomic scope" value="Eukaryota"/>
</dbReference>
<dbReference type="GeneTree" id="ENSGT00940000161349"/>
<dbReference type="HOGENOM" id="CLU_036265_1_0_1"/>
<dbReference type="InParanoid" id="Q9CQV4"/>
<dbReference type="OMA" id="HRVFQHV"/>
<dbReference type="OrthoDB" id="37406at9989"/>
<dbReference type="PhylomeDB" id="Q9CQV4"/>
<dbReference type="TreeFam" id="TF329111"/>
<dbReference type="BioGRID-ORCS" id="67998">
    <property type="hits" value="5 hits in 77 CRISPR screens"/>
</dbReference>
<dbReference type="ChiTaRS" id="Fam134c">
    <property type="organism name" value="mouse"/>
</dbReference>
<dbReference type="PRO" id="PR:Q9CQV4"/>
<dbReference type="Proteomes" id="UP000000589">
    <property type="component" value="Chromosome 11"/>
</dbReference>
<dbReference type="RNAct" id="Q9CQV4">
    <property type="molecule type" value="protein"/>
</dbReference>
<dbReference type="Bgee" id="ENSMUSG00000017802">
    <property type="expression patterns" value="Expressed in lip and 247 other cell types or tissues"/>
</dbReference>
<dbReference type="GO" id="GO:0005783">
    <property type="term" value="C:endoplasmic reticulum"/>
    <property type="evidence" value="ECO:0000314"/>
    <property type="project" value="MGI"/>
</dbReference>
<dbReference type="GO" id="GO:0005789">
    <property type="term" value="C:endoplasmic reticulum membrane"/>
    <property type="evidence" value="ECO:0007669"/>
    <property type="project" value="UniProtKB-SubCell"/>
</dbReference>
<dbReference type="GO" id="GO:0071782">
    <property type="term" value="C:endoplasmic reticulum tubular network"/>
    <property type="evidence" value="ECO:0000250"/>
    <property type="project" value="UniProtKB"/>
</dbReference>
<dbReference type="GO" id="GO:0032991">
    <property type="term" value="C:protein-containing complex"/>
    <property type="evidence" value="ECO:0000266"/>
    <property type="project" value="MGI"/>
</dbReference>
<dbReference type="GO" id="GO:0140506">
    <property type="term" value="F:endoplasmic reticulum-autophagosome adaptor activity"/>
    <property type="evidence" value="ECO:0000315"/>
    <property type="project" value="MGI"/>
</dbReference>
<dbReference type="GO" id="GO:0030574">
    <property type="term" value="P:collagen catabolic process"/>
    <property type="evidence" value="ECO:0000315"/>
    <property type="project" value="MGI"/>
</dbReference>
<dbReference type="GO" id="GO:0007029">
    <property type="term" value="P:endoplasmic reticulum organization"/>
    <property type="evidence" value="ECO:0000315"/>
    <property type="project" value="MGI"/>
</dbReference>
<dbReference type="GO" id="GO:0071786">
    <property type="term" value="P:endoplasmic reticulum tubular network organization"/>
    <property type="evidence" value="ECO:0000250"/>
    <property type="project" value="UniProtKB"/>
</dbReference>
<dbReference type="GO" id="GO:0010976">
    <property type="term" value="P:positive regulation of neuron projection development"/>
    <property type="evidence" value="ECO:0000250"/>
    <property type="project" value="UniProtKB"/>
</dbReference>
<dbReference type="GO" id="GO:0061709">
    <property type="term" value="P:reticulophagy"/>
    <property type="evidence" value="ECO:0000314"/>
    <property type="project" value="MGI"/>
</dbReference>
<dbReference type="CDD" id="cd22562">
    <property type="entry name" value="RETR3_RHD"/>
    <property type="match status" value="1"/>
</dbReference>
<dbReference type="InterPro" id="IPR055258">
    <property type="entry name" value="RETR3_RHD"/>
</dbReference>
<dbReference type="InterPro" id="IPR043384">
    <property type="entry name" value="RETREG1/3"/>
</dbReference>
<dbReference type="PANTHER" id="PTHR28659">
    <property type="entry name" value="RETICULON-LIKE PROTEIN"/>
    <property type="match status" value="1"/>
</dbReference>
<dbReference type="PANTHER" id="PTHR28659:SF1">
    <property type="entry name" value="RETICULOPHAGY REGULATOR 3"/>
    <property type="match status" value="1"/>
</dbReference>
<dbReference type="Pfam" id="PF24456">
    <property type="entry name" value="RHD_RETREG1-3"/>
    <property type="match status" value="1"/>
</dbReference>
<accession>Q9CQV4</accession>
<accession>Q3TQL8</accession>
<accession>Q3U9Q7</accession>
<accession>Q8BQC4</accession>
<accession>Q922X3</accession>
<name>RETR3_MOUSE</name>
<proteinExistence type="evidence at protein level"/>
<gene>
    <name type="primary">Retreg3</name>
    <name type="synonym">Fam134c</name>
</gene>
<organism>
    <name type="scientific">Mus musculus</name>
    <name type="common">Mouse</name>
    <dbReference type="NCBI Taxonomy" id="10090"/>
    <lineage>
        <taxon>Eukaryota</taxon>
        <taxon>Metazoa</taxon>
        <taxon>Chordata</taxon>
        <taxon>Craniata</taxon>
        <taxon>Vertebrata</taxon>
        <taxon>Euteleostomi</taxon>
        <taxon>Mammalia</taxon>
        <taxon>Eutheria</taxon>
        <taxon>Euarchontoglires</taxon>
        <taxon>Glires</taxon>
        <taxon>Rodentia</taxon>
        <taxon>Myomorpha</taxon>
        <taxon>Muroidea</taxon>
        <taxon>Muridae</taxon>
        <taxon>Murinae</taxon>
        <taxon>Mus</taxon>
        <taxon>Mus</taxon>
    </lineage>
</organism>
<feature type="chain" id="PRO_0000288470" description="Reticulophagy regulator 3">
    <location>
        <begin position="1"/>
        <end position="466"/>
    </location>
</feature>
<feature type="topological domain" description="Cytoplasmic" evidence="1">
    <location>
        <begin position="1"/>
        <end position="80"/>
    </location>
</feature>
<feature type="transmembrane region" description="Helical" evidence="3">
    <location>
        <begin position="81"/>
        <end position="101"/>
    </location>
</feature>
<feature type="topological domain" description="Lumenal" evidence="8">
    <location>
        <begin position="102"/>
        <end position="168"/>
    </location>
</feature>
<feature type="transmembrane region" description="Helical" evidence="3">
    <location>
        <begin position="169"/>
        <end position="187"/>
    </location>
</feature>
<feature type="topological domain" description="Cytoplasmic" evidence="8">
    <location>
        <begin position="188"/>
        <end position="192"/>
    </location>
</feature>
<feature type="transmembrane region" description="Helical" evidence="3">
    <location>
        <begin position="193"/>
        <end position="211"/>
    </location>
</feature>
<feature type="topological domain" description="Lumenal" evidence="8">
    <location>
        <begin position="212"/>
        <end position="381"/>
    </location>
</feature>
<feature type="transmembrane region" description="Helical" evidence="3">
    <location>
        <begin position="382"/>
        <end position="401"/>
    </location>
</feature>
<feature type="topological domain" description="Cytoplasmic" evidence="1">
    <location>
        <begin position="402"/>
        <end position="466"/>
    </location>
</feature>
<feature type="region of interest" description="Disordered" evidence="4">
    <location>
        <begin position="244"/>
        <end position="263"/>
    </location>
</feature>
<feature type="region of interest" description="Disordered" evidence="4">
    <location>
        <begin position="285"/>
        <end position="335"/>
    </location>
</feature>
<feature type="region of interest" description="Disordered" evidence="4">
    <location>
        <begin position="412"/>
        <end position="444"/>
    </location>
</feature>
<feature type="short sequence motif" description="LIR motif" evidence="2">
    <location>
        <begin position="445"/>
        <end position="450"/>
    </location>
</feature>
<feature type="compositionally biased region" description="Basic and acidic residues" evidence="4">
    <location>
        <begin position="248"/>
        <end position="259"/>
    </location>
</feature>
<feature type="compositionally biased region" description="Polar residues" evidence="4">
    <location>
        <begin position="294"/>
        <end position="310"/>
    </location>
</feature>
<feature type="compositionally biased region" description="Basic and acidic residues" evidence="4">
    <location>
        <begin position="316"/>
        <end position="331"/>
    </location>
</feature>
<feature type="modified residue" description="Phosphoserine" evidence="10">
    <location>
        <position position="26"/>
    </location>
</feature>
<feature type="modified residue" description="Phosphothreonine" evidence="10">
    <location>
        <position position="254"/>
    </location>
</feature>
<feature type="modified residue" description="Phosphoserine" evidence="10">
    <location>
        <position position="258"/>
    </location>
</feature>
<feature type="modified residue" description="Phosphoserine" evidence="10">
    <location>
        <position position="260"/>
    </location>
</feature>
<feature type="modified residue" description="Phosphothreonine" evidence="9 10">
    <location>
        <position position="283"/>
    </location>
</feature>
<feature type="modified residue" description="Phosphoserine" evidence="9 10">
    <location>
        <position position="285"/>
    </location>
</feature>
<feature type="modified residue" description="Phosphoserine" evidence="9 10">
    <location>
        <position position="288"/>
    </location>
</feature>
<feature type="modified residue" description="Phosphoserine" evidence="10">
    <location>
        <position position="293"/>
    </location>
</feature>
<feature type="modified residue" description="Phosphoserine" evidence="9">
    <location>
        <position position="303"/>
    </location>
</feature>
<feature type="modified residue" description="Phosphothreonine" evidence="10">
    <location>
        <position position="307"/>
    </location>
</feature>
<feature type="modified residue" description="Phosphothreonine" evidence="9 10">
    <location>
        <position position="310"/>
    </location>
</feature>
<feature type="modified residue" description="Phosphoserine" evidence="9 10">
    <location>
        <position position="313"/>
    </location>
</feature>
<feature type="modified residue" description="Phosphoserine" evidence="9 10">
    <location>
        <position position="320"/>
    </location>
</feature>
<feature type="modified residue" description="Phosphoserine" evidence="1">
    <location>
        <position position="360"/>
    </location>
</feature>
<feature type="modified residue" description="Phosphothreonine" evidence="1">
    <location>
        <position position="440"/>
    </location>
</feature>
<feature type="splice variant" id="VSP_025689" description="In isoform 2." evidence="7">
    <location>
        <begin position="1"/>
        <end position="181"/>
    </location>
</feature>
<feature type="mutagenesis site" description="Abolishes interaction with ATG8 family proteins." evidence="6">
    <original>FELL</original>
    <variation>AELA</variation>
    <location>
        <begin position="447"/>
        <end position="450"/>
    </location>
</feature>
<feature type="sequence conflict" description="In Ref. 1; BAE37364." evidence="8" ref="1">
    <original>P</original>
    <variation>H</variation>
    <location>
        <position position="340"/>
    </location>
</feature>
<feature type="sequence conflict" description="In Ref. 1; BAE30609." evidence="8" ref="1">
    <original>S</original>
    <variation>T</variation>
    <location>
        <position position="360"/>
    </location>
</feature>
<reference key="1">
    <citation type="journal article" date="2005" name="Science">
        <title>The transcriptional landscape of the mammalian genome.</title>
        <authorList>
            <person name="Carninci P."/>
            <person name="Kasukawa T."/>
            <person name="Katayama S."/>
            <person name="Gough J."/>
            <person name="Frith M.C."/>
            <person name="Maeda N."/>
            <person name="Oyama R."/>
            <person name="Ravasi T."/>
            <person name="Lenhard B."/>
            <person name="Wells C."/>
            <person name="Kodzius R."/>
            <person name="Shimokawa K."/>
            <person name="Bajic V.B."/>
            <person name="Brenner S.E."/>
            <person name="Batalov S."/>
            <person name="Forrest A.R."/>
            <person name="Zavolan M."/>
            <person name="Davis M.J."/>
            <person name="Wilming L.G."/>
            <person name="Aidinis V."/>
            <person name="Allen J.E."/>
            <person name="Ambesi-Impiombato A."/>
            <person name="Apweiler R."/>
            <person name="Aturaliya R.N."/>
            <person name="Bailey T.L."/>
            <person name="Bansal M."/>
            <person name="Baxter L."/>
            <person name="Beisel K.W."/>
            <person name="Bersano T."/>
            <person name="Bono H."/>
            <person name="Chalk A.M."/>
            <person name="Chiu K.P."/>
            <person name="Choudhary V."/>
            <person name="Christoffels A."/>
            <person name="Clutterbuck D.R."/>
            <person name="Crowe M.L."/>
            <person name="Dalla E."/>
            <person name="Dalrymple B.P."/>
            <person name="de Bono B."/>
            <person name="Della Gatta G."/>
            <person name="di Bernardo D."/>
            <person name="Down T."/>
            <person name="Engstrom P."/>
            <person name="Fagiolini M."/>
            <person name="Faulkner G."/>
            <person name="Fletcher C.F."/>
            <person name="Fukushima T."/>
            <person name="Furuno M."/>
            <person name="Futaki S."/>
            <person name="Gariboldi M."/>
            <person name="Georgii-Hemming P."/>
            <person name="Gingeras T.R."/>
            <person name="Gojobori T."/>
            <person name="Green R.E."/>
            <person name="Gustincich S."/>
            <person name="Harbers M."/>
            <person name="Hayashi Y."/>
            <person name="Hensch T.K."/>
            <person name="Hirokawa N."/>
            <person name="Hill D."/>
            <person name="Huminiecki L."/>
            <person name="Iacono M."/>
            <person name="Ikeo K."/>
            <person name="Iwama A."/>
            <person name="Ishikawa T."/>
            <person name="Jakt M."/>
            <person name="Kanapin A."/>
            <person name="Katoh M."/>
            <person name="Kawasawa Y."/>
            <person name="Kelso J."/>
            <person name="Kitamura H."/>
            <person name="Kitano H."/>
            <person name="Kollias G."/>
            <person name="Krishnan S.P."/>
            <person name="Kruger A."/>
            <person name="Kummerfeld S.K."/>
            <person name="Kurochkin I.V."/>
            <person name="Lareau L.F."/>
            <person name="Lazarevic D."/>
            <person name="Lipovich L."/>
            <person name="Liu J."/>
            <person name="Liuni S."/>
            <person name="McWilliam S."/>
            <person name="Madan Babu M."/>
            <person name="Madera M."/>
            <person name="Marchionni L."/>
            <person name="Matsuda H."/>
            <person name="Matsuzawa S."/>
            <person name="Miki H."/>
            <person name="Mignone F."/>
            <person name="Miyake S."/>
            <person name="Morris K."/>
            <person name="Mottagui-Tabar S."/>
            <person name="Mulder N."/>
            <person name="Nakano N."/>
            <person name="Nakauchi H."/>
            <person name="Ng P."/>
            <person name="Nilsson R."/>
            <person name="Nishiguchi S."/>
            <person name="Nishikawa S."/>
            <person name="Nori F."/>
            <person name="Ohara O."/>
            <person name="Okazaki Y."/>
            <person name="Orlando V."/>
            <person name="Pang K.C."/>
            <person name="Pavan W.J."/>
            <person name="Pavesi G."/>
            <person name="Pesole G."/>
            <person name="Petrovsky N."/>
            <person name="Piazza S."/>
            <person name="Reed J."/>
            <person name="Reid J.F."/>
            <person name="Ring B.Z."/>
            <person name="Ringwald M."/>
            <person name="Rost B."/>
            <person name="Ruan Y."/>
            <person name="Salzberg S.L."/>
            <person name="Sandelin A."/>
            <person name="Schneider C."/>
            <person name="Schoenbach C."/>
            <person name="Sekiguchi K."/>
            <person name="Semple C.A."/>
            <person name="Seno S."/>
            <person name="Sessa L."/>
            <person name="Sheng Y."/>
            <person name="Shibata Y."/>
            <person name="Shimada H."/>
            <person name="Shimada K."/>
            <person name="Silva D."/>
            <person name="Sinclair B."/>
            <person name="Sperling S."/>
            <person name="Stupka E."/>
            <person name="Sugiura K."/>
            <person name="Sultana R."/>
            <person name="Takenaka Y."/>
            <person name="Taki K."/>
            <person name="Tammoja K."/>
            <person name="Tan S.L."/>
            <person name="Tang S."/>
            <person name="Taylor M.S."/>
            <person name="Tegner J."/>
            <person name="Teichmann S.A."/>
            <person name="Ueda H.R."/>
            <person name="van Nimwegen E."/>
            <person name="Verardo R."/>
            <person name="Wei C.L."/>
            <person name="Yagi K."/>
            <person name="Yamanishi H."/>
            <person name="Zabarovsky E."/>
            <person name="Zhu S."/>
            <person name="Zimmer A."/>
            <person name="Hide W."/>
            <person name="Bult C."/>
            <person name="Grimmond S.M."/>
            <person name="Teasdale R.D."/>
            <person name="Liu E.T."/>
            <person name="Brusic V."/>
            <person name="Quackenbush J."/>
            <person name="Wahlestedt C."/>
            <person name="Mattick J.S."/>
            <person name="Hume D.A."/>
            <person name="Kai C."/>
            <person name="Sasaki D."/>
            <person name="Tomaru Y."/>
            <person name="Fukuda S."/>
            <person name="Kanamori-Katayama M."/>
            <person name="Suzuki M."/>
            <person name="Aoki J."/>
            <person name="Arakawa T."/>
            <person name="Iida J."/>
            <person name="Imamura K."/>
            <person name="Itoh M."/>
            <person name="Kato T."/>
            <person name="Kawaji H."/>
            <person name="Kawagashira N."/>
            <person name="Kawashima T."/>
            <person name="Kojima M."/>
            <person name="Kondo S."/>
            <person name="Konno H."/>
            <person name="Nakano K."/>
            <person name="Ninomiya N."/>
            <person name="Nishio T."/>
            <person name="Okada M."/>
            <person name="Plessy C."/>
            <person name="Shibata K."/>
            <person name="Shiraki T."/>
            <person name="Suzuki S."/>
            <person name="Tagami M."/>
            <person name="Waki K."/>
            <person name="Watahiki A."/>
            <person name="Okamura-Oho Y."/>
            <person name="Suzuki H."/>
            <person name="Kawai J."/>
            <person name="Hayashizaki Y."/>
        </authorList>
    </citation>
    <scope>NUCLEOTIDE SEQUENCE [LARGE SCALE MRNA] (ISOFORMS 1 AND 2)</scope>
    <source>
        <strain>C57BL/6J</strain>
        <tissue>Bone marrow</tissue>
        <tissue>Corpora quadrigemina</tissue>
        <tissue>Liver</tissue>
    </source>
</reference>
<reference key="2">
    <citation type="journal article" date="2009" name="PLoS Biol.">
        <title>Lineage-specific biology revealed by a finished genome assembly of the mouse.</title>
        <authorList>
            <person name="Church D.M."/>
            <person name="Goodstadt L."/>
            <person name="Hillier L.W."/>
            <person name="Zody M.C."/>
            <person name="Goldstein S."/>
            <person name="She X."/>
            <person name="Bult C.J."/>
            <person name="Agarwala R."/>
            <person name="Cherry J.L."/>
            <person name="DiCuccio M."/>
            <person name="Hlavina W."/>
            <person name="Kapustin Y."/>
            <person name="Meric P."/>
            <person name="Maglott D."/>
            <person name="Birtle Z."/>
            <person name="Marques A.C."/>
            <person name="Graves T."/>
            <person name="Zhou S."/>
            <person name="Teague B."/>
            <person name="Potamousis K."/>
            <person name="Churas C."/>
            <person name="Place M."/>
            <person name="Herschleb J."/>
            <person name="Runnheim R."/>
            <person name="Forrest D."/>
            <person name="Amos-Landgraf J."/>
            <person name="Schwartz D.C."/>
            <person name="Cheng Z."/>
            <person name="Lindblad-Toh K."/>
            <person name="Eichler E.E."/>
            <person name="Ponting C.P."/>
        </authorList>
    </citation>
    <scope>NUCLEOTIDE SEQUENCE [LARGE SCALE GENOMIC DNA]</scope>
    <source>
        <strain>C57BL/6J</strain>
    </source>
</reference>
<reference key="3">
    <citation type="journal article" date="2004" name="Genome Res.">
        <title>The status, quality, and expansion of the NIH full-length cDNA project: the Mammalian Gene Collection (MGC).</title>
        <authorList>
            <consortium name="The MGC Project Team"/>
        </authorList>
    </citation>
    <scope>NUCLEOTIDE SEQUENCE [LARGE SCALE MRNA] (ISOFORM 1)</scope>
    <source>
        <strain>FVB/N</strain>
        <tissue>Eye</tissue>
        <tissue>Mammary tumor</tissue>
    </source>
</reference>
<reference key="4">
    <citation type="journal article" date="2007" name="Proc. Natl. Acad. Sci. U.S.A.">
        <title>Large-scale phosphorylation analysis of mouse liver.</title>
        <authorList>
            <person name="Villen J."/>
            <person name="Beausoleil S.A."/>
            <person name="Gerber S.A."/>
            <person name="Gygi S.P."/>
        </authorList>
    </citation>
    <scope>PHOSPHORYLATION [LARGE SCALE ANALYSIS] AT THR-283; SER-285; SER-288; SER-303; THR-310; SER-313 AND SER-320</scope>
    <scope>IDENTIFICATION BY MASS SPECTROMETRY [LARGE SCALE ANALYSIS]</scope>
    <source>
        <tissue>Liver</tissue>
    </source>
</reference>
<reference key="5">
    <citation type="journal article" date="2009" name="Nat. Genet.">
        <title>Mutations in FAM134B, encoding a newly identified Golgi protein, cause severe sensory and autonomic neuropathy.</title>
        <authorList>
            <person name="Kurth I."/>
            <person name="Pamminger T."/>
            <person name="Hennings J.C."/>
            <person name="Soehendra D."/>
            <person name="Huebner A.K."/>
            <person name="Rotthier A."/>
            <person name="Baets J."/>
            <person name="Senderek J."/>
            <person name="Topaloglu H."/>
            <person name="Farrell S.A."/>
            <person name="Nuernberg G."/>
            <person name="Nurnberg P."/>
            <person name="De Jonghe P."/>
            <person name="Gal A."/>
            <person name="Kaether C."/>
            <person name="Timmerman V."/>
            <person name="Huebner C.A."/>
        </authorList>
    </citation>
    <scope>TISSUE SPECIFICITY</scope>
</reference>
<reference key="6">
    <citation type="journal article" date="2010" name="Cell">
        <title>A tissue-specific atlas of mouse protein phosphorylation and expression.</title>
        <authorList>
            <person name="Huttlin E.L."/>
            <person name="Jedrychowski M.P."/>
            <person name="Elias J.E."/>
            <person name="Goswami T."/>
            <person name="Rad R."/>
            <person name="Beausoleil S.A."/>
            <person name="Villen J."/>
            <person name="Haas W."/>
            <person name="Sowa M.E."/>
            <person name="Gygi S.P."/>
        </authorList>
    </citation>
    <scope>PHOSPHORYLATION [LARGE SCALE ANALYSIS] AT SER-26; THR-254; SER-258; SER-260; THR-283; SER-285; SER-288; SER-293; THR-307; THR-310; SER-313 AND SER-320</scope>
    <scope>IDENTIFICATION BY MASS SPECTROMETRY [LARGE SCALE ANALYSIS]</scope>
    <source>
        <tissue>Brain</tissue>
        <tissue>Brown adipose tissue</tissue>
        <tissue>Heart</tissue>
        <tissue>Kidney</tissue>
        <tissue>Liver</tissue>
        <tissue>Lung</tissue>
        <tissue>Pancreas</tissue>
        <tissue>Spleen</tissue>
        <tissue>Testis</tissue>
    </source>
</reference>
<reference key="7">
    <citation type="journal article" date="2021" name="EMBO Rep.">
        <title>Role of FAM134 paralogues in endoplasmic reticulum remodeling, ER-phagy, and Collagen quality control.</title>
        <authorList>
            <person name="Reggio A."/>
            <person name="Buonomo V."/>
            <person name="Berkane R."/>
            <person name="Bhaskara R.M."/>
            <person name="Tellechea M."/>
            <person name="Peluso I."/>
            <person name="Polishchuk E."/>
            <person name="Di Lorenzo G."/>
            <person name="Cirillo C."/>
            <person name="Esposito M."/>
            <person name="Hussain A."/>
            <person name="Huebner A.K."/>
            <person name="Huebner C.A."/>
            <person name="Settembre C."/>
            <person name="Hummer G."/>
            <person name="Grumati P."/>
            <person name="Stolz A."/>
        </authorList>
    </citation>
    <scope>FUNCTION</scope>
    <scope>INTERACTION WITH MAP1LC3A; MAP1LC3B; GABARAPL1 AND GABARAPL1</scope>
    <scope>TISSUE SPECIFICITY</scope>
    <scope>MUTAGENESIS OF 447-PHE--LEU-450</scope>
</reference>
<evidence type="ECO:0000250" key="1">
    <source>
        <dbReference type="UniProtKB" id="Q86VR2"/>
    </source>
</evidence>
<evidence type="ECO:0000250" key="2">
    <source>
        <dbReference type="UniProtKB" id="Q9H6L5"/>
    </source>
</evidence>
<evidence type="ECO:0000255" key="3"/>
<evidence type="ECO:0000256" key="4">
    <source>
        <dbReference type="SAM" id="MobiDB-lite"/>
    </source>
</evidence>
<evidence type="ECO:0000269" key="5">
    <source>
    </source>
</evidence>
<evidence type="ECO:0000269" key="6">
    <source>
    </source>
</evidence>
<evidence type="ECO:0000303" key="7">
    <source>
    </source>
</evidence>
<evidence type="ECO:0000305" key="8"/>
<evidence type="ECO:0007744" key="9">
    <source>
    </source>
</evidence>
<evidence type="ECO:0007744" key="10">
    <source>
    </source>
</evidence>
<sequence length="466" mass="51638">MEEAEGVAAAPGPASGLAFRGRRAMSGSWERDQQVEAAQRTLVEVLGPYEPLLSRVQAALVWERPARSALWCLGLNAAFWFFALTSLRFVFLLAFSLMIIVCIDQWKNKIWPEINVPRPDALDNESWGFVHPRLLSVPELCHHVAEVWVSGTIFIRNLLLFKKQNPGKFCLLSCGVLTFLAMLGRYIPGLLLSYLMLVIIMMWPLAVYHRLWDRAYVRLKPVLQRLDFSVRGYMMSKQRERQLRRRALHSERATDSHSDSEEELAAFCPQLDDSTVARELAITDSEHSDAEVSCTENGTFNLSRGQTPLTEGSEDLDGHSDPEESFARDLPDFPSINVDPAGLDDEDDTSIGMPSLMYRSPPGAGDTQVLPASRNEAALPELLLSSLPGGSNLTSNLASLVSQGMIQLALSEASQTDPSGPPPRRATRGFLRAPSSDLDTDAEGDDFELLDQSELNQLDPASSRSH</sequence>
<protein>
    <recommendedName>
        <fullName>Reticulophagy regulator 3</fullName>
    </recommendedName>
</protein>
<comment type="function">
    <text evidence="1 6">Endoplasmic reticulum (ER)-anchored autophagy regulator which exists in an inactive state under basal conditions but is activated following cellular stress (PubMed:34338405). When activated, induces ER fragmentation and mediates ER delivery into lysosomes through sequestration into autophagosomes via interaction with ATG8 family proteins (PubMed:34338405). Promotes ER membrane curvature and ER tubulation required for subsequent ER fragmentation and engulfment into autophagosomes (By similarity). Required for collagen quality control in a LIR motif-dependent manner (PubMed:34338405). Mediates NRF1-enhanced neurite outgrowth (By similarity).</text>
</comment>
<comment type="subunit">
    <text evidence="1 6">Interacts with ATG8 family modifier proteins MAP1LC3A, MAP1LC3B, GABARAPL1 and GABARAPL2 (PubMed:34338405). Also interacts with ATG8 family modifier protein GABARAP (By similarity). Interacts with CANX (By similarity). Interacts with RTN4 isoform B (By similarity).</text>
</comment>
<comment type="subcellular location">
    <subcellularLocation>
        <location evidence="1">Endoplasmic reticulum membrane</location>
        <topology evidence="3">Multi-pass membrane protein</topology>
    </subcellularLocation>
    <text evidence="1">Localizes preferentially to endoplasmic reticulum tubules and sheet edges.</text>
</comment>
<comment type="alternative products">
    <event type="alternative splicing"/>
    <isoform>
        <id>Q9CQV4-1</id>
        <name>1</name>
        <sequence type="displayed"/>
    </isoform>
    <isoform>
        <id>Q9CQV4-2</id>
        <name>2</name>
        <sequence type="described" ref="VSP_025689"/>
    </isoform>
</comment>
<comment type="tissue specificity">
    <text evidence="5 6">Widely expressed with highest levels in brain, lung, liver, muscle and spleen (protein level) (PubMed:34338405). Mainly expressed in the central nervous system and in parenchymatous organs including liver, lung and kidney.</text>
</comment>
<comment type="domain">
    <text evidence="1">The LIR motif interacts with ATG8 family proteins.</text>
</comment>
<comment type="similarity">
    <text evidence="8">Belongs to the RETREG family.</text>
</comment>